<gene>
    <name evidence="1" type="primary">glgB</name>
    <name type="ordered locus">RB2638</name>
</gene>
<keyword id="KW-0119">Carbohydrate metabolism</keyword>
<keyword id="KW-0320">Glycogen biosynthesis</keyword>
<keyword id="KW-0321">Glycogen metabolism</keyword>
<keyword id="KW-0328">Glycosyltransferase</keyword>
<keyword id="KW-1185">Reference proteome</keyword>
<keyword id="KW-0808">Transferase</keyword>
<dbReference type="EC" id="2.4.1.18" evidence="1"/>
<dbReference type="EMBL" id="BX294137">
    <property type="protein sequence ID" value="CAD72753.1"/>
    <property type="molecule type" value="Genomic_DNA"/>
</dbReference>
<dbReference type="RefSeq" id="NP_865069.1">
    <property type="nucleotide sequence ID" value="NC_005027.1"/>
</dbReference>
<dbReference type="RefSeq" id="WP_007324338.1">
    <property type="nucleotide sequence ID" value="NC_005027.1"/>
</dbReference>
<dbReference type="SMR" id="Q7UVH1"/>
<dbReference type="FunCoup" id="Q7UVH1">
    <property type="interactions" value="428"/>
</dbReference>
<dbReference type="STRING" id="243090.RB2638"/>
<dbReference type="CAZy" id="CBM48">
    <property type="family name" value="Carbohydrate-Binding Module Family 48"/>
</dbReference>
<dbReference type="CAZy" id="GH13">
    <property type="family name" value="Glycoside Hydrolase Family 13"/>
</dbReference>
<dbReference type="EnsemblBacteria" id="CAD72753">
    <property type="protein sequence ID" value="CAD72753"/>
    <property type="gene ID" value="RB2638"/>
</dbReference>
<dbReference type="KEGG" id="rba:RB2638"/>
<dbReference type="PATRIC" id="fig|243090.15.peg.1210"/>
<dbReference type="eggNOG" id="COG0296">
    <property type="taxonomic scope" value="Bacteria"/>
</dbReference>
<dbReference type="HOGENOM" id="CLU_004245_3_2_0"/>
<dbReference type="InParanoid" id="Q7UVH1"/>
<dbReference type="OrthoDB" id="226102at2"/>
<dbReference type="UniPathway" id="UPA00164"/>
<dbReference type="Proteomes" id="UP000001025">
    <property type="component" value="Chromosome"/>
</dbReference>
<dbReference type="GO" id="GO:0005737">
    <property type="term" value="C:cytoplasm"/>
    <property type="evidence" value="ECO:0000318"/>
    <property type="project" value="GO_Central"/>
</dbReference>
<dbReference type="GO" id="GO:0005829">
    <property type="term" value="C:cytosol"/>
    <property type="evidence" value="ECO:0000318"/>
    <property type="project" value="GO_Central"/>
</dbReference>
<dbReference type="GO" id="GO:0003844">
    <property type="term" value="F:1,4-alpha-glucan branching enzyme activity"/>
    <property type="evidence" value="ECO:0000318"/>
    <property type="project" value="GO_Central"/>
</dbReference>
<dbReference type="GO" id="GO:0043169">
    <property type="term" value="F:cation binding"/>
    <property type="evidence" value="ECO:0007669"/>
    <property type="project" value="InterPro"/>
</dbReference>
<dbReference type="GO" id="GO:0004553">
    <property type="term" value="F:hydrolase activity, hydrolyzing O-glycosyl compounds"/>
    <property type="evidence" value="ECO:0007669"/>
    <property type="project" value="InterPro"/>
</dbReference>
<dbReference type="GO" id="GO:0005978">
    <property type="term" value="P:glycogen biosynthetic process"/>
    <property type="evidence" value="ECO:0000318"/>
    <property type="project" value="GO_Central"/>
</dbReference>
<dbReference type="CDD" id="cd11322">
    <property type="entry name" value="AmyAc_Glg_BE"/>
    <property type="match status" value="1"/>
</dbReference>
<dbReference type="CDD" id="cd02855">
    <property type="entry name" value="E_set_GBE_prok_N"/>
    <property type="match status" value="1"/>
</dbReference>
<dbReference type="FunFam" id="2.60.40.10:FF:000169">
    <property type="entry name" value="1,4-alpha-glucan branching enzyme GlgB"/>
    <property type="match status" value="1"/>
</dbReference>
<dbReference type="FunFam" id="2.60.40.1180:FF:000002">
    <property type="entry name" value="1,4-alpha-glucan branching enzyme GlgB"/>
    <property type="match status" value="1"/>
</dbReference>
<dbReference type="FunFam" id="3.20.20.80:FF:000003">
    <property type="entry name" value="1,4-alpha-glucan branching enzyme GlgB"/>
    <property type="match status" value="1"/>
</dbReference>
<dbReference type="Gene3D" id="3.20.20.80">
    <property type="entry name" value="Glycosidases"/>
    <property type="match status" value="1"/>
</dbReference>
<dbReference type="Gene3D" id="2.60.40.1180">
    <property type="entry name" value="Golgi alpha-mannosidase II"/>
    <property type="match status" value="1"/>
</dbReference>
<dbReference type="Gene3D" id="2.60.40.10">
    <property type="entry name" value="Immunoglobulins"/>
    <property type="match status" value="2"/>
</dbReference>
<dbReference type="HAMAP" id="MF_00685">
    <property type="entry name" value="GlgB"/>
    <property type="match status" value="1"/>
</dbReference>
<dbReference type="InterPro" id="IPR006048">
    <property type="entry name" value="A-amylase/branching_C"/>
</dbReference>
<dbReference type="InterPro" id="IPR037439">
    <property type="entry name" value="Branching_enzy"/>
</dbReference>
<dbReference type="InterPro" id="IPR006407">
    <property type="entry name" value="GlgB"/>
</dbReference>
<dbReference type="InterPro" id="IPR054169">
    <property type="entry name" value="GlgB_N"/>
</dbReference>
<dbReference type="InterPro" id="IPR044143">
    <property type="entry name" value="GlgB_N_E_set_prok"/>
</dbReference>
<dbReference type="InterPro" id="IPR006047">
    <property type="entry name" value="Glyco_hydro_13_cat_dom"/>
</dbReference>
<dbReference type="InterPro" id="IPR004193">
    <property type="entry name" value="Glyco_hydro_13_N"/>
</dbReference>
<dbReference type="InterPro" id="IPR013780">
    <property type="entry name" value="Glyco_hydro_b"/>
</dbReference>
<dbReference type="InterPro" id="IPR017853">
    <property type="entry name" value="Glycoside_hydrolase_SF"/>
</dbReference>
<dbReference type="InterPro" id="IPR013783">
    <property type="entry name" value="Ig-like_fold"/>
</dbReference>
<dbReference type="InterPro" id="IPR014756">
    <property type="entry name" value="Ig_E-set"/>
</dbReference>
<dbReference type="NCBIfam" id="TIGR01515">
    <property type="entry name" value="branching_enzym"/>
    <property type="match status" value="1"/>
</dbReference>
<dbReference type="NCBIfam" id="NF003811">
    <property type="entry name" value="PRK05402.1"/>
    <property type="match status" value="1"/>
</dbReference>
<dbReference type="NCBIfam" id="NF008967">
    <property type="entry name" value="PRK12313.1"/>
    <property type="match status" value="1"/>
</dbReference>
<dbReference type="PANTHER" id="PTHR43651">
    <property type="entry name" value="1,4-ALPHA-GLUCAN-BRANCHING ENZYME"/>
    <property type="match status" value="1"/>
</dbReference>
<dbReference type="PANTHER" id="PTHR43651:SF3">
    <property type="entry name" value="1,4-ALPHA-GLUCAN-BRANCHING ENZYME"/>
    <property type="match status" value="1"/>
</dbReference>
<dbReference type="Pfam" id="PF00128">
    <property type="entry name" value="Alpha-amylase"/>
    <property type="match status" value="1"/>
</dbReference>
<dbReference type="Pfam" id="PF02806">
    <property type="entry name" value="Alpha-amylase_C"/>
    <property type="match status" value="1"/>
</dbReference>
<dbReference type="Pfam" id="PF02922">
    <property type="entry name" value="CBM_48"/>
    <property type="match status" value="1"/>
</dbReference>
<dbReference type="Pfam" id="PF22019">
    <property type="entry name" value="GlgB_N"/>
    <property type="match status" value="1"/>
</dbReference>
<dbReference type="PIRSF" id="PIRSF000463">
    <property type="entry name" value="GlgB"/>
    <property type="match status" value="1"/>
</dbReference>
<dbReference type="SMART" id="SM00642">
    <property type="entry name" value="Aamy"/>
    <property type="match status" value="1"/>
</dbReference>
<dbReference type="SUPFAM" id="SSF51445">
    <property type="entry name" value="(Trans)glycosidases"/>
    <property type="match status" value="1"/>
</dbReference>
<dbReference type="SUPFAM" id="SSF81296">
    <property type="entry name" value="E set domains"/>
    <property type="match status" value="2"/>
</dbReference>
<dbReference type="SUPFAM" id="SSF51011">
    <property type="entry name" value="Glycosyl hydrolase domain"/>
    <property type="match status" value="1"/>
</dbReference>
<name>GLGB_RHOBA</name>
<comment type="function">
    <text evidence="1">Catalyzes the formation of the alpha-1,6-glucosidic linkages in glycogen by scission of a 1,4-alpha-linked oligosaccharide from growing alpha-1,4-glucan chains and the subsequent attachment of the oligosaccharide to the alpha-1,6 position.</text>
</comment>
<comment type="catalytic activity">
    <reaction evidence="1">
        <text>Transfers a segment of a (1-&gt;4)-alpha-D-glucan chain to a primary hydroxy group in a similar glucan chain.</text>
        <dbReference type="EC" id="2.4.1.18"/>
    </reaction>
</comment>
<comment type="pathway">
    <text evidence="1">Glycan biosynthesis; glycogen biosynthesis.</text>
</comment>
<comment type="subunit">
    <text evidence="1">Monomer.</text>
</comment>
<comment type="similarity">
    <text evidence="1">Belongs to the glycosyl hydrolase 13 family. GlgB subfamily.</text>
</comment>
<proteinExistence type="inferred from homology"/>
<sequence length="736" mass="83639">MNSQLSLSTIQSLVDGSVANPGSLLGRHPVNYRGREATSVRVLEPNAESVWLIDSASGLRRPMRRLHPGGFFEAICDEPITKPSTSRLQMIDKTGKEIKTTSPYTVPSIFSDLDRYLIGEGRHNQLYERLGAQLREVDGVKGVNFAVWAPNARSVQVVGDFNGWDGRGHVAQPVESTGIWELFLPGATVGQKYKFRIQTQHGHWMDKCDPMAFAAELPPLTANIITDINTYSWNDSDWLQQRAEMDPMHTPMNVYEVHLGSWQKGPGRTHGWLDYRDLAKRLVDYCHRMNFTHVELMPISEHPFTGSWGYQSVGYYAPTSRHGSPEDFMFFVDHMHQNGIGVLIDWVPAHFPKDDHGLRQFDGSALYEHADPRQGEHPDWGTMIFNFGRNEVKNFLIANALFWLDKYHIDGLRVDAVASMLYLDYSREDGEWIPNRYGGRENLESIDFLRDFNIAVHENHPGVITAAEESTAWPGVSRPTYDGGLGFTYKWNMGWMNDTLSYMRNEPIHRKFHQNELTFSLIYAFTENFTLPLSHDEVVHGKGSLISQMPGDMWQKFANLRLLYSYMWTHPGKKLLFMGGEIAQWTEWNADDGPQWELLDFDTHRGVQQLVADLNKVVIENPALHWHDFTGDGFEWIDAHNAEDSVLVYLRKGAEGDPPILVCNNFTPVPRDNYRVGVPAQGFWKEIFNSDGEAYGGSNLGNYPGCQTTGIEHHARPDSIEVTLPPLGTTILRLES</sequence>
<protein>
    <recommendedName>
        <fullName evidence="1">1,4-alpha-glucan branching enzyme GlgB</fullName>
        <ecNumber evidence="1">2.4.1.18</ecNumber>
    </recommendedName>
    <alternativeName>
        <fullName evidence="1">1,4-alpha-D-glucan:1,4-alpha-D-glucan 6-glucosyl-transferase</fullName>
    </alternativeName>
    <alternativeName>
        <fullName evidence="1">Alpha-(1-&gt;4)-glucan branching enzyme</fullName>
    </alternativeName>
    <alternativeName>
        <fullName evidence="1">Glycogen branching enzyme</fullName>
        <shortName evidence="1">BE</shortName>
    </alternativeName>
</protein>
<reference key="1">
    <citation type="journal article" date="2003" name="Proc. Natl. Acad. Sci. U.S.A.">
        <title>Complete genome sequence of the marine planctomycete Pirellula sp. strain 1.</title>
        <authorList>
            <person name="Gloeckner F.O."/>
            <person name="Kube M."/>
            <person name="Bauer M."/>
            <person name="Teeling H."/>
            <person name="Lombardot T."/>
            <person name="Ludwig W."/>
            <person name="Gade D."/>
            <person name="Beck A."/>
            <person name="Borzym K."/>
            <person name="Heitmann K."/>
            <person name="Rabus R."/>
            <person name="Schlesner H."/>
            <person name="Amann R."/>
            <person name="Reinhardt R."/>
        </authorList>
    </citation>
    <scope>NUCLEOTIDE SEQUENCE [LARGE SCALE GENOMIC DNA]</scope>
    <source>
        <strain>DSM 10527 / NCIMB 13988 / SH1</strain>
    </source>
</reference>
<accession>Q7UVH1</accession>
<evidence type="ECO:0000255" key="1">
    <source>
        <dbReference type="HAMAP-Rule" id="MF_00685"/>
    </source>
</evidence>
<organism>
    <name type="scientific">Rhodopirellula baltica (strain DSM 10527 / NCIMB 13988 / SH1)</name>
    <dbReference type="NCBI Taxonomy" id="243090"/>
    <lineage>
        <taxon>Bacteria</taxon>
        <taxon>Pseudomonadati</taxon>
        <taxon>Planctomycetota</taxon>
        <taxon>Planctomycetia</taxon>
        <taxon>Pirellulales</taxon>
        <taxon>Pirellulaceae</taxon>
        <taxon>Rhodopirellula</taxon>
    </lineage>
</organism>
<feature type="chain" id="PRO_0000188736" description="1,4-alpha-glucan branching enzyme GlgB">
    <location>
        <begin position="1"/>
        <end position="736"/>
    </location>
</feature>
<feature type="active site" description="Nucleophile" evidence="1">
    <location>
        <position position="415"/>
    </location>
</feature>
<feature type="active site" description="Proton donor" evidence="1">
    <location>
        <position position="468"/>
    </location>
</feature>